<evidence type="ECO:0000250" key="1"/>
<evidence type="ECO:0000255" key="2"/>
<evidence type="ECO:0000255" key="3">
    <source>
        <dbReference type="PROSITE-ProRule" id="PRU00967"/>
    </source>
</evidence>
<evidence type="ECO:0000255" key="4">
    <source>
        <dbReference type="PROSITE-ProRule" id="PRU00968"/>
    </source>
</evidence>
<evidence type="ECO:0000269" key="5">
    <source>
    </source>
</evidence>
<evidence type="ECO:0000305" key="6"/>
<evidence type="ECO:0007829" key="7">
    <source>
        <dbReference type="PDB" id="6XI0"/>
    </source>
</evidence>
<name>CYB_RHOCB</name>
<keyword id="KW-0002">3D-structure</keyword>
<keyword id="KW-1003">Cell membrane</keyword>
<keyword id="KW-0249">Electron transport</keyword>
<keyword id="KW-0349">Heme</keyword>
<keyword id="KW-0408">Iron</keyword>
<keyword id="KW-0472">Membrane</keyword>
<keyword id="KW-0479">Metal-binding</keyword>
<keyword id="KW-1185">Reference proteome</keyword>
<keyword id="KW-0679">Respiratory chain</keyword>
<keyword id="KW-0812">Transmembrane</keyword>
<keyword id="KW-1133">Transmembrane helix</keyword>
<keyword id="KW-0813">Transport</keyword>
<reference key="1">
    <citation type="journal article" date="1987" name="J. Mol. Biol.">
        <title>Primary structure of the bc1 complex of Rhodopseudomonas capsulata. Nucleotide sequence of the pet operon encoding the Rieske cytochrome b, and cytochrome c1 apoproteins.</title>
        <authorList>
            <person name="Davidson E."/>
            <person name="Daldal F."/>
        </authorList>
    </citation>
    <scope>NUCLEOTIDE SEQUENCE [GENOMIC DNA]</scope>
    <source>
        <strain>ATCC BAA-309 / NBRC 16581 / SB1003</strain>
    </source>
</reference>
<reference key="2">
    <citation type="journal article" date="2010" name="J. Bacteriol.">
        <title>Complete genome sequence of the photosynthetic purple nonsulfur bacterium Rhodobacter capsulatus SB 1003.</title>
        <authorList>
            <person name="Strnad H."/>
            <person name="Lapidus A."/>
            <person name="Paces J."/>
            <person name="Ulbrich P."/>
            <person name="Vlcek C."/>
            <person name="Paces V."/>
            <person name="Haselkorn R."/>
        </authorList>
    </citation>
    <scope>NUCLEOTIDE SEQUENCE [LARGE SCALE GENOMIC DNA]</scope>
    <source>
        <strain>ATCC BAA-309 / NBRC 16581 / SB1003</strain>
    </source>
</reference>
<reference key="3">
    <citation type="journal article" date="1990" name="Biochemistry">
        <title>Mutants of ubiquinol-cytochrome c2 oxidoreductase resistant to Qo site inhibitors: consequences for ubiquinone and ubiquinol affinity and catalysis.</title>
        <authorList>
            <person name="Robertson D.E."/>
            <person name="Daldal F."/>
            <person name="Dutton P.L."/>
        </authorList>
    </citation>
    <scope>MUTAGENESIS OF PHE-144</scope>
    <source>
        <strain>MT1131</strain>
    </source>
</reference>
<organism>
    <name type="scientific">Rhodobacter capsulatus (strain ATCC BAA-309 / NBRC 16581 / SB1003)</name>
    <dbReference type="NCBI Taxonomy" id="272942"/>
    <lineage>
        <taxon>Bacteria</taxon>
        <taxon>Pseudomonadati</taxon>
        <taxon>Pseudomonadota</taxon>
        <taxon>Alphaproteobacteria</taxon>
        <taxon>Rhodobacterales</taxon>
        <taxon>Rhodobacter group</taxon>
        <taxon>Rhodobacter</taxon>
    </lineage>
</organism>
<proteinExistence type="evidence at protein level"/>
<comment type="function">
    <text evidence="1">Component of the ubiquinol-cytochrome c reductase complex (complex III or cytochrome b-c1 complex), which is a respiratory chain that generates an electrochemical potential coupled to ATP synthesis.</text>
</comment>
<comment type="cofactor">
    <cofactor evidence="1">
        <name>heme b</name>
        <dbReference type="ChEBI" id="CHEBI:60344"/>
    </cofactor>
    <text evidence="1">Binds 2 heme b groups non-covalently.</text>
</comment>
<comment type="subunit">
    <text evidence="1">The main subunits of complex b-c1 are: cytochrome b, cytochrome c1 and the Rieske protein.</text>
</comment>
<comment type="subcellular location">
    <subcellularLocation>
        <location evidence="6">Cell membrane</location>
        <topology evidence="6">Multi-pass membrane protein</topology>
    </subcellularLocation>
</comment>
<comment type="miscellaneous">
    <text evidence="1">Heme 1 (or BL or b562) is low-potential and absorbs at about 562 nm, and heme 2 (or BH or b566) is high-potential and absorbs at about 566 nm.</text>
</comment>
<comment type="similarity">
    <text evidence="3 4">Belongs to the cytochrome b family.</text>
</comment>
<protein>
    <recommendedName>
        <fullName>Cytochrome b</fullName>
    </recommendedName>
</protein>
<feature type="initiator methionine" description="Removed" evidence="1">
    <location>
        <position position="1"/>
    </location>
</feature>
<feature type="chain" id="PRO_0000409864" description="Cytochrome b">
    <location>
        <begin position="2"/>
        <end position="437"/>
    </location>
</feature>
<feature type="transmembrane region" description="Helical" evidence="2">
    <location>
        <begin position="45"/>
        <end position="65"/>
    </location>
</feature>
<feature type="transmembrane region" description="Helical" evidence="2">
    <location>
        <begin position="100"/>
        <end position="120"/>
    </location>
</feature>
<feature type="transmembrane region" description="Helical" evidence="2">
    <location>
        <begin position="129"/>
        <end position="149"/>
    </location>
</feature>
<feature type="transmembrane region" description="Helical" evidence="2">
    <location>
        <begin position="156"/>
        <end position="176"/>
    </location>
</feature>
<feature type="transmembrane region" description="Helical" evidence="2">
    <location>
        <begin position="194"/>
        <end position="214"/>
    </location>
</feature>
<feature type="transmembrane region" description="Helical" evidence="2">
    <location>
        <begin position="248"/>
        <end position="268"/>
    </location>
</feature>
<feature type="transmembrane region" description="Helical" evidence="2">
    <location>
        <begin position="298"/>
        <end position="318"/>
    </location>
</feature>
<feature type="transmembrane region" description="Helical" evidence="2">
    <location>
        <begin position="330"/>
        <end position="350"/>
    </location>
</feature>
<feature type="transmembrane region" description="Helical" evidence="2">
    <location>
        <begin position="365"/>
        <end position="385"/>
    </location>
</feature>
<feature type="transmembrane region" description="Helical" evidence="2">
    <location>
        <begin position="391"/>
        <end position="411"/>
    </location>
</feature>
<feature type="binding site" description="axial binding residue">
    <location>
        <position position="97"/>
    </location>
    <ligand>
        <name>heme b</name>
        <dbReference type="ChEBI" id="CHEBI:60344"/>
        <label>b562</label>
    </ligand>
    <ligandPart>
        <name>Fe</name>
        <dbReference type="ChEBI" id="CHEBI:18248"/>
    </ligandPart>
</feature>
<feature type="binding site" description="axial binding residue">
    <location>
        <position position="111"/>
    </location>
    <ligand>
        <name>heme b</name>
        <dbReference type="ChEBI" id="CHEBI:60344"/>
        <label>b566</label>
    </ligand>
    <ligandPart>
        <name>Fe</name>
        <dbReference type="ChEBI" id="CHEBI:18248"/>
    </ligandPart>
</feature>
<feature type="binding site" description="axial binding residue">
    <location>
        <position position="198"/>
    </location>
    <ligand>
        <name>heme b</name>
        <dbReference type="ChEBI" id="CHEBI:60344"/>
        <label>b562</label>
    </ligand>
    <ligandPart>
        <name>Fe</name>
        <dbReference type="ChEBI" id="CHEBI:18248"/>
    </ligandPart>
</feature>
<feature type="binding site" description="axial binding residue">
    <location>
        <position position="212"/>
    </location>
    <ligand>
        <name>heme b</name>
        <dbReference type="ChEBI" id="CHEBI:60344"/>
        <label>b566</label>
    </ligand>
    <ligandPart>
        <name>Fe</name>
        <dbReference type="ChEBI" id="CHEBI:18248"/>
    </ligandPart>
</feature>
<feature type="mutagenesis site" description="Loss of binding affinity for ubiquinone and ubiquinol." evidence="5">
    <original>F</original>
    <variation>L</variation>
    <variation>S</variation>
    <location>
        <position position="144"/>
    </location>
</feature>
<feature type="helix" evidence="7">
    <location>
        <begin position="15"/>
        <end position="18"/>
    </location>
</feature>
<feature type="helix" evidence="7">
    <location>
        <begin position="24"/>
        <end position="32"/>
    </location>
</feature>
<feature type="helix" evidence="7">
    <location>
        <begin position="47"/>
        <end position="65"/>
    </location>
</feature>
<feature type="turn" evidence="7">
    <location>
        <begin position="66"/>
        <end position="68"/>
    </location>
</feature>
<feature type="turn" evidence="7">
    <location>
        <begin position="73"/>
        <end position="75"/>
    </location>
</feature>
<feature type="helix" evidence="7">
    <location>
        <begin position="76"/>
        <end position="85"/>
    </location>
</feature>
<feature type="strand" evidence="7">
    <location>
        <begin position="87"/>
        <end position="89"/>
    </location>
</feature>
<feature type="helix" evidence="7">
    <location>
        <begin position="91"/>
        <end position="117"/>
    </location>
</feature>
<feature type="strand" evidence="7">
    <location>
        <begin position="120"/>
        <end position="122"/>
    </location>
</feature>
<feature type="helix" evidence="7">
    <location>
        <begin position="126"/>
        <end position="147"/>
    </location>
</feature>
<feature type="turn" evidence="7">
    <location>
        <begin position="148"/>
        <end position="150"/>
    </location>
</feature>
<feature type="helix" evidence="7">
    <location>
        <begin position="154"/>
        <end position="168"/>
    </location>
</feature>
<feature type="strand" evidence="7">
    <location>
        <begin position="169"/>
        <end position="172"/>
    </location>
</feature>
<feature type="helix" evidence="7">
    <location>
        <begin position="173"/>
        <end position="181"/>
    </location>
</feature>
<feature type="strand" evidence="7">
    <location>
        <begin position="183"/>
        <end position="185"/>
    </location>
</feature>
<feature type="helix" evidence="7">
    <location>
        <begin position="188"/>
        <end position="198"/>
    </location>
</feature>
<feature type="helix" evidence="7">
    <location>
        <begin position="201"/>
        <end position="218"/>
    </location>
</feature>
<feature type="strand" evidence="7">
    <location>
        <begin position="224"/>
        <end position="226"/>
    </location>
</feature>
<feature type="turn" evidence="7">
    <location>
        <begin position="244"/>
        <end position="246"/>
    </location>
</feature>
<feature type="helix" evidence="7">
    <location>
        <begin position="247"/>
        <end position="269"/>
    </location>
</feature>
<feature type="strand" evidence="7">
    <location>
        <begin position="273"/>
        <end position="275"/>
    </location>
</feature>
<feature type="helix" evidence="7">
    <location>
        <begin position="277"/>
        <end position="280"/>
    </location>
</feature>
<feature type="strand" evidence="7">
    <location>
        <begin position="296"/>
        <end position="298"/>
    </location>
</feature>
<feature type="helix" evidence="7">
    <location>
        <begin position="299"/>
        <end position="307"/>
    </location>
</feature>
<feature type="helix" evidence="7">
    <location>
        <begin position="317"/>
        <end position="320"/>
    </location>
</feature>
<feature type="helix" evidence="7">
    <location>
        <begin position="328"/>
        <end position="345"/>
    </location>
</feature>
<feature type="helix" evidence="7">
    <location>
        <begin position="346"/>
        <end position="348"/>
    </location>
</feature>
<feature type="helix" evidence="7">
    <location>
        <begin position="357"/>
        <end position="359"/>
    </location>
</feature>
<feature type="helix" evidence="7">
    <location>
        <begin position="361"/>
        <end position="380"/>
    </location>
</feature>
<feature type="helix" evidence="7">
    <location>
        <begin position="389"/>
        <end position="414"/>
    </location>
</feature>
<dbReference type="EMBL" id="X05630">
    <property type="protein sequence ID" value="CAA29117.1"/>
    <property type="molecule type" value="Genomic_DNA"/>
</dbReference>
<dbReference type="EMBL" id="CP001312">
    <property type="protein sequence ID" value="ADE86498.1"/>
    <property type="molecule type" value="Genomic_DNA"/>
</dbReference>
<dbReference type="PIR" id="B29336">
    <property type="entry name" value="B29336"/>
</dbReference>
<dbReference type="RefSeq" id="WP_013068476.1">
    <property type="nucleotide sequence ID" value="NC_014034.1"/>
</dbReference>
<dbReference type="PDB" id="6XI0">
    <property type="method" value="EM"/>
    <property type="resolution" value="3.30 A"/>
    <property type="chains" value="C/P=1-437"/>
</dbReference>
<dbReference type="PDB" id="6XKT">
    <property type="method" value="EM"/>
    <property type="resolution" value="3.75 A"/>
    <property type="chains" value="C/P=1-437"/>
</dbReference>
<dbReference type="PDB" id="6XKU">
    <property type="method" value="EM"/>
    <property type="resolution" value="4.20 A"/>
    <property type="chains" value="C/P=1-437"/>
</dbReference>
<dbReference type="PDB" id="6XKV">
    <property type="method" value="EM"/>
    <property type="resolution" value="3.50 A"/>
    <property type="chains" value="C/P=1-437"/>
</dbReference>
<dbReference type="PDB" id="6XKW">
    <property type="method" value="EM"/>
    <property type="resolution" value="5.20 A"/>
    <property type="chains" value="C/P=1-437"/>
</dbReference>
<dbReference type="PDB" id="6XKX">
    <property type="method" value="EM"/>
    <property type="resolution" value="6.10 A"/>
    <property type="chains" value="C/P=1-437"/>
</dbReference>
<dbReference type="PDB" id="6XKZ">
    <property type="method" value="EM"/>
    <property type="resolution" value="7.20 A"/>
    <property type="chains" value="C/P=1-437"/>
</dbReference>
<dbReference type="PDBsum" id="6XI0"/>
<dbReference type="PDBsum" id="6XKT"/>
<dbReference type="PDBsum" id="6XKU"/>
<dbReference type="PDBsum" id="6XKV"/>
<dbReference type="PDBsum" id="6XKW"/>
<dbReference type="PDBsum" id="6XKX"/>
<dbReference type="PDBsum" id="6XKZ"/>
<dbReference type="EMDB" id="EMD-22189"/>
<dbReference type="EMDB" id="EMD-22224"/>
<dbReference type="EMDB" id="EMD-22225"/>
<dbReference type="EMDB" id="EMD-22226"/>
<dbReference type="EMDB" id="EMD-22227"/>
<dbReference type="EMDB" id="EMD-22228"/>
<dbReference type="EMDB" id="EMD-22230"/>
<dbReference type="SMR" id="D5ANZ3"/>
<dbReference type="STRING" id="272942.RCAP_rcc02769"/>
<dbReference type="GeneID" id="31491587"/>
<dbReference type="KEGG" id="rcp:RCAP_rcc02769"/>
<dbReference type="eggNOG" id="COG1290">
    <property type="taxonomic scope" value="Bacteria"/>
</dbReference>
<dbReference type="HOGENOM" id="CLU_031114_3_0_5"/>
<dbReference type="OrthoDB" id="9804503at2"/>
<dbReference type="Proteomes" id="UP000002361">
    <property type="component" value="Chromosome"/>
</dbReference>
<dbReference type="GO" id="GO:0005886">
    <property type="term" value="C:plasma membrane"/>
    <property type="evidence" value="ECO:0007669"/>
    <property type="project" value="UniProtKB-SubCell"/>
</dbReference>
<dbReference type="GO" id="GO:0045275">
    <property type="term" value="C:respiratory chain complex III"/>
    <property type="evidence" value="ECO:0007669"/>
    <property type="project" value="InterPro"/>
</dbReference>
<dbReference type="GO" id="GO:0046872">
    <property type="term" value="F:metal ion binding"/>
    <property type="evidence" value="ECO:0007669"/>
    <property type="project" value="UniProtKB-KW"/>
</dbReference>
<dbReference type="GO" id="GO:0008121">
    <property type="term" value="F:ubiquinol-cytochrome-c reductase activity"/>
    <property type="evidence" value="ECO:0007669"/>
    <property type="project" value="InterPro"/>
</dbReference>
<dbReference type="GO" id="GO:0022904">
    <property type="term" value="P:respiratory electron transport chain"/>
    <property type="evidence" value="ECO:0007669"/>
    <property type="project" value="InterPro"/>
</dbReference>
<dbReference type="CDD" id="cd00290">
    <property type="entry name" value="cytochrome_b_C"/>
    <property type="match status" value="1"/>
</dbReference>
<dbReference type="CDD" id="cd00284">
    <property type="entry name" value="Cytochrome_b_N"/>
    <property type="match status" value="1"/>
</dbReference>
<dbReference type="FunFam" id="1.20.810.10:FF:000010">
    <property type="entry name" value="Cytochrome b"/>
    <property type="match status" value="1"/>
</dbReference>
<dbReference type="Gene3D" id="1.20.810.10">
    <property type="entry name" value="Cytochrome Bc1 Complex, Chain C"/>
    <property type="match status" value="1"/>
</dbReference>
<dbReference type="InterPro" id="IPR005798">
    <property type="entry name" value="Cyt_b/b6_C"/>
</dbReference>
<dbReference type="InterPro" id="IPR036150">
    <property type="entry name" value="Cyt_b/b6_C_sf"/>
</dbReference>
<dbReference type="InterPro" id="IPR005797">
    <property type="entry name" value="Cyt_b/b6_N"/>
</dbReference>
<dbReference type="InterPro" id="IPR027387">
    <property type="entry name" value="Cytb/b6-like_sf"/>
</dbReference>
<dbReference type="InterPro" id="IPR030689">
    <property type="entry name" value="Cytochrome_b"/>
</dbReference>
<dbReference type="InterPro" id="IPR048260">
    <property type="entry name" value="Cytochrome_b_C_euk/bac"/>
</dbReference>
<dbReference type="InterPro" id="IPR048259">
    <property type="entry name" value="Cytochrome_b_N_euk/bac"/>
</dbReference>
<dbReference type="InterPro" id="IPR016174">
    <property type="entry name" value="Di-haem_cyt_TM"/>
</dbReference>
<dbReference type="PANTHER" id="PTHR19271">
    <property type="entry name" value="CYTOCHROME B"/>
    <property type="match status" value="1"/>
</dbReference>
<dbReference type="PANTHER" id="PTHR19271:SF16">
    <property type="entry name" value="CYTOCHROME B"/>
    <property type="match status" value="1"/>
</dbReference>
<dbReference type="Pfam" id="PF00032">
    <property type="entry name" value="Cytochrom_B_C"/>
    <property type="match status" value="1"/>
</dbReference>
<dbReference type="Pfam" id="PF00033">
    <property type="entry name" value="Cytochrome_B"/>
    <property type="match status" value="1"/>
</dbReference>
<dbReference type="PIRSF" id="PIRSF038885">
    <property type="entry name" value="COB"/>
    <property type="match status" value="1"/>
</dbReference>
<dbReference type="SUPFAM" id="SSF81648">
    <property type="entry name" value="a domain/subunit of cytochrome bc1 complex (Ubiquinol-cytochrome c reductase)"/>
    <property type="match status" value="1"/>
</dbReference>
<dbReference type="SUPFAM" id="SSF81342">
    <property type="entry name" value="Transmembrane di-heme cytochromes"/>
    <property type="match status" value="1"/>
</dbReference>
<dbReference type="PROSITE" id="PS51003">
    <property type="entry name" value="CYTB_CTER"/>
    <property type="match status" value="1"/>
</dbReference>
<dbReference type="PROSITE" id="PS51002">
    <property type="entry name" value="CYTB_NTER"/>
    <property type="match status" value="1"/>
</dbReference>
<gene>
    <name type="primary">petB</name>
    <name type="synonym">cytB</name>
    <name type="ordered locus">RCAP_rcc02769</name>
</gene>
<sequence>MSGIPHDHYEPKTGIEKWLHDRLPIVGLVYDTIMIPTPKNLNWWWIWGIVLAFTLVLQIVTGIVLAMHYTPHVDLAFASVEHIMRDVNGGWAMRYIHANGASLFFLAVYIHIFRGLYYGSYKAPREITWIVGMVIYLLMMGTAFMGYVLPWGQMSFWGATVITGLFGAIPGIGPSIQAWLLGGPAVDNATLNRFFSLHYLLPFVIAALVAIHIWAFHTTGNNNPTGVEVRRTSKADAEKDTLPFWPYFVIKDLFALALVLLGFFAVVAYMPNYLGHPDNYVQANPLSTPAHIVPEWYFLPFYAILRAFAADVWVVILVDGLTFGIVDAKFFGVIAMFGAIAVMALAPWLDTSKVRSGAYRPKFRMWFWFLVLDFVVLTWVGAMPTEYPYDWISLIASTYWFAYFLVILPLLGATEKPEPIPASIEEDFNSHYGNPAE</sequence>
<accession>D5ANZ3</accession>
<accession>P07057</accession>
<accession>P08502</accession>